<gene>
    <name evidence="1" type="primary">rpsJ</name>
    <name type="ordered locus">MYPE10190</name>
</gene>
<reference key="1">
    <citation type="journal article" date="2002" name="Nucleic Acids Res.">
        <title>The complete genomic sequence of Mycoplasma penetrans, an intracellular bacterial pathogen in humans.</title>
        <authorList>
            <person name="Sasaki Y."/>
            <person name="Ishikawa J."/>
            <person name="Yamashita A."/>
            <person name="Oshima K."/>
            <person name="Kenri T."/>
            <person name="Furuya K."/>
            <person name="Yoshino C."/>
            <person name="Horino A."/>
            <person name="Shiba T."/>
            <person name="Sasaki T."/>
            <person name="Hattori M."/>
        </authorList>
    </citation>
    <scope>NUCLEOTIDE SEQUENCE [LARGE SCALE GENOMIC DNA]</scope>
    <source>
        <strain>HF-2</strain>
    </source>
</reference>
<sequence length="102" mass="11930">MKNEMKIKLFSYDHRLLDQSVRKIIKSSQDSGAKVKGPIPLPTKKEIFTICRSPHVNKTSREQFERRTHQRLIILLNTTEKTKEYLKNIIIPSGVDIQITLR</sequence>
<comment type="function">
    <text evidence="1">Involved in the binding of tRNA to the ribosomes.</text>
</comment>
<comment type="subunit">
    <text evidence="1">Part of the 30S ribosomal subunit.</text>
</comment>
<comment type="similarity">
    <text evidence="1">Belongs to the universal ribosomal protein uS10 family.</text>
</comment>
<comment type="sequence caution" evidence="2">
    <conflict type="erroneous initiation">
        <sequence resource="EMBL-CDS" id="BAC44804"/>
    </conflict>
</comment>
<keyword id="KW-1185">Reference proteome</keyword>
<keyword id="KW-0687">Ribonucleoprotein</keyword>
<keyword id="KW-0689">Ribosomal protein</keyword>
<evidence type="ECO:0000255" key="1">
    <source>
        <dbReference type="HAMAP-Rule" id="MF_00508"/>
    </source>
</evidence>
<evidence type="ECO:0000305" key="2"/>
<feature type="chain" id="PRO_0000146557" description="Small ribosomal subunit protein uS10">
    <location>
        <begin position="1"/>
        <end position="102"/>
    </location>
</feature>
<name>RS10_MALP2</name>
<dbReference type="EMBL" id="BA000026">
    <property type="protein sequence ID" value="BAC44804.1"/>
    <property type="status" value="ALT_INIT"/>
    <property type="molecule type" value="Genomic_DNA"/>
</dbReference>
<dbReference type="RefSeq" id="WP_044891323.1">
    <property type="nucleotide sequence ID" value="NC_004432.1"/>
</dbReference>
<dbReference type="SMR" id="Q8EUB2"/>
<dbReference type="FunCoup" id="Q8EUB2">
    <property type="interactions" value="270"/>
</dbReference>
<dbReference type="STRING" id="272633.gene:10732138"/>
<dbReference type="KEGG" id="mpe:MYPE10190"/>
<dbReference type="eggNOG" id="COG0051">
    <property type="taxonomic scope" value="Bacteria"/>
</dbReference>
<dbReference type="HOGENOM" id="CLU_122625_1_2_14"/>
<dbReference type="InParanoid" id="Q8EUB2"/>
<dbReference type="Proteomes" id="UP000002522">
    <property type="component" value="Chromosome"/>
</dbReference>
<dbReference type="GO" id="GO:1990904">
    <property type="term" value="C:ribonucleoprotein complex"/>
    <property type="evidence" value="ECO:0007669"/>
    <property type="project" value="UniProtKB-KW"/>
</dbReference>
<dbReference type="GO" id="GO:0005840">
    <property type="term" value="C:ribosome"/>
    <property type="evidence" value="ECO:0007669"/>
    <property type="project" value="UniProtKB-KW"/>
</dbReference>
<dbReference type="GO" id="GO:0003735">
    <property type="term" value="F:structural constituent of ribosome"/>
    <property type="evidence" value="ECO:0007669"/>
    <property type="project" value="InterPro"/>
</dbReference>
<dbReference type="GO" id="GO:0000049">
    <property type="term" value="F:tRNA binding"/>
    <property type="evidence" value="ECO:0007669"/>
    <property type="project" value="UniProtKB-UniRule"/>
</dbReference>
<dbReference type="GO" id="GO:0006412">
    <property type="term" value="P:translation"/>
    <property type="evidence" value="ECO:0007669"/>
    <property type="project" value="UniProtKB-UniRule"/>
</dbReference>
<dbReference type="FunFam" id="3.30.70.600:FF:000003">
    <property type="entry name" value="30S ribosomal protein S10"/>
    <property type="match status" value="1"/>
</dbReference>
<dbReference type="Gene3D" id="3.30.70.600">
    <property type="entry name" value="Ribosomal protein S10 domain"/>
    <property type="match status" value="1"/>
</dbReference>
<dbReference type="HAMAP" id="MF_00508">
    <property type="entry name" value="Ribosomal_uS10"/>
    <property type="match status" value="1"/>
</dbReference>
<dbReference type="InterPro" id="IPR001848">
    <property type="entry name" value="Ribosomal_uS10"/>
</dbReference>
<dbReference type="InterPro" id="IPR027486">
    <property type="entry name" value="Ribosomal_uS10_dom"/>
</dbReference>
<dbReference type="InterPro" id="IPR036838">
    <property type="entry name" value="Ribosomal_uS10_dom_sf"/>
</dbReference>
<dbReference type="NCBIfam" id="NF001861">
    <property type="entry name" value="PRK00596.1"/>
    <property type="match status" value="1"/>
</dbReference>
<dbReference type="NCBIfam" id="TIGR01049">
    <property type="entry name" value="rpsJ_bact"/>
    <property type="match status" value="1"/>
</dbReference>
<dbReference type="PANTHER" id="PTHR11700">
    <property type="entry name" value="30S RIBOSOMAL PROTEIN S10 FAMILY MEMBER"/>
    <property type="match status" value="1"/>
</dbReference>
<dbReference type="Pfam" id="PF00338">
    <property type="entry name" value="Ribosomal_S10"/>
    <property type="match status" value="1"/>
</dbReference>
<dbReference type="PRINTS" id="PR00971">
    <property type="entry name" value="RIBOSOMALS10"/>
</dbReference>
<dbReference type="SMART" id="SM01403">
    <property type="entry name" value="Ribosomal_S10"/>
    <property type="match status" value="1"/>
</dbReference>
<dbReference type="SUPFAM" id="SSF54999">
    <property type="entry name" value="Ribosomal protein S10"/>
    <property type="match status" value="1"/>
</dbReference>
<protein>
    <recommendedName>
        <fullName evidence="1">Small ribosomal subunit protein uS10</fullName>
    </recommendedName>
    <alternativeName>
        <fullName evidence="2">30S ribosomal protein S10</fullName>
    </alternativeName>
</protein>
<accession>Q8EUB2</accession>
<proteinExistence type="inferred from homology"/>
<organism>
    <name type="scientific">Malacoplasma penetrans (strain HF-2)</name>
    <name type="common">Mycoplasma penetrans</name>
    <dbReference type="NCBI Taxonomy" id="272633"/>
    <lineage>
        <taxon>Bacteria</taxon>
        <taxon>Bacillati</taxon>
        <taxon>Mycoplasmatota</taxon>
        <taxon>Mycoplasmoidales</taxon>
        <taxon>Mycoplasmoidaceae</taxon>
        <taxon>Malacoplasma</taxon>
    </lineage>
</organism>